<feature type="chain" id="PRO_0000356325" description="Snaclec A9">
    <location>
        <begin position="1"/>
        <end position="133"/>
    </location>
</feature>
<feature type="domain" description="C-type lectin" evidence="2">
    <location>
        <begin position="11"/>
        <end position="132"/>
    </location>
</feature>
<feature type="disulfide bond" evidence="2">
    <location>
        <begin position="4"/>
        <end position="15"/>
    </location>
</feature>
<feature type="disulfide bond" evidence="2">
    <location>
        <begin position="32"/>
        <end position="131"/>
    </location>
</feature>
<feature type="disulfide bond" description="Interchain" evidence="2">
    <location>
        <position position="83"/>
    </location>
</feature>
<feature type="disulfide bond" evidence="2">
    <location>
        <begin position="106"/>
        <end position="123"/>
    </location>
</feature>
<organism>
    <name type="scientific">Macrovipera lebetinus</name>
    <name type="common">Levantine viper</name>
    <name type="synonym">Vipera lebetina</name>
    <dbReference type="NCBI Taxonomy" id="3148341"/>
    <lineage>
        <taxon>Eukaryota</taxon>
        <taxon>Metazoa</taxon>
        <taxon>Chordata</taxon>
        <taxon>Craniata</taxon>
        <taxon>Vertebrata</taxon>
        <taxon>Euteleostomi</taxon>
        <taxon>Lepidosauria</taxon>
        <taxon>Squamata</taxon>
        <taxon>Bifurcata</taxon>
        <taxon>Unidentata</taxon>
        <taxon>Episquamata</taxon>
        <taxon>Toxicofera</taxon>
        <taxon>Serpentes</taxon>
        <taxon>Colubroidea</taxon>
        <taxon>Viperidae</taxon>
        <taxon>Viperinae</taxon>
        <taxon>Macrovipera</taxon>
    </lineage>
</organism>
<name>SLA9_MACLB</name>
<keyword id="KW-1015">Disulfide bond</keyword>
<keyword id="KW-1199">Hemostasis impairing toxin</keyword>
<keyword id="KW-0964">Secreted</keyword>
<keyword id="KW-0800">Toxin</keyword>
<protein>
    <recommendedName>
        <fullName>Snaclec A9</fullName>
    </recommendedName>
    <alternativeName>
        <fullName>C-type lectin A9</fullName>
    </alternativeName>
</protein>
<accession>B4XSZ9</accession>
<sequence length="133" mass="15643">DQDCLPGWSFYEGHCYKVFNLDKTWEDAEKFCTEQANSGHLVSIDSKKEANFVAELVSQNIKETRRTDFVWIGLRAEDKRQHCSSEWSDGSSINYQNWIEAESKKCLGLEKQTRYRKWVNLNCGQPYRFTCEI</sequence>
<proteinExistence type="evidence at transcript level"/>
<comment type="function">
    <text evidence="1">Interferes with one step of hemostasis (modulation of platelet aggregation, or coagulation cascade, for example).</text>
</comment>
<comment type="subunit">
    <text evidence="1">Heterodimer; disulfide-linked.</text>
</comment>
<comment type="subcellular location">
    <subcellularLocation>
        <location evidence="1">Secreted</location>
    </subcellularLocation>
</comment>
<comment type="tissue specificity">
    <text>Expressed by the venom gland.</text>
</comment>
<comment type="miscellaneous">
    <text>Shows greater sequence similarity to the alpha than beta subunits compared to other heterodimer snaclecs.</text>
</comment>
<comment type="similarity">
    <text evidence="3">Belongs to the snaclec family.</text>
</comment>
<dbReference type="EMBL" id="EU085461">
    <property type="protein sequence ID" value="ABW82671.1"/>
    <property type="molecule type" value="mRNA"/>
</dbReference>
<dbReference type="SMR" id="B4XSZ9"/>
<dbReference type="GO" id="GO:0005576">
    <property type="term" value="C:extracellular region"/>
    <property type="evidence" value="ECO:0007669"/>
    <property type="project" value="UniProtKB-SubCell"/>
</dbReference>
<dbReference type="GO" id="GO:0090729">
    <property type="term" value="F:toxin activity"/>
    <property type="evidence" value="ECO:0007669"/>
    <property type="project" value="UniProtKB-KW"/>
</dbReference>
<dbReference type="FunFam" id="3.10.100.10:FF:000087">
    <property type="entry name" value="Snaclec rhodocetin subunit delta"/>
    <property type="match status" value="1"/>
</dbReference>
<dbReference type="Gene3D" id="3.10.100.10">
    <property type="entry name" value="Mannose-Binding Protein A, subunit A"/>
    <property type="match status" value="1"/>
</dbReference>
<dbReference type="InterPro" id="IPR001304">
    <property type="entry name" value="C-type_lectin-like"/>
</dbReference>
<dbReference type="InterPro" id="IPR016186">
    <property type="entry name" value="C-type_lectin-like/link_sf"/>
</dbReference>
<dbReference type="InterPro" id="IPR050111">
    <property type="entry name" value="C-type_lectin/snaclec_domain"/>
</dbReference>
<dbReference type="InterPro" id="IPR018378">
    <property type="entry name" value="C-type_lectin_CS"/>
</dbReference>
<dbReference type="InterPro" id="IPR016187">
    <property type="entry name" value="CTDL_fold"/>
</dbReference>
<dbReference type="PANTHER" id="PTHR22803">
    <property type="entry name" value="MANNOSE, PHOSPHOLIPASE, LECTIN RECEPTOR RELATED"/>
    <property type="match status" value="1"/>
</dbReference>
<dbReference type="Pfam" id="PF00059">
    <property type="entry name" value="Lectin_C"/>
    <property type="match status" value="1"/>
</dbReference>
<dbReference type="SMART" id="SM00034">
    <property type="entry name" value="CLECT"/>
    <property type="match status" value="1"/>
</dbReference>
<dbReference type="SUPFAM" id="SSF56436">
    <property type="entry name" value="C-type lectin-like"/>
    <property type="match status" value="1"/>
</dbReference>
<dbReference type="PROSITE" id="PS00615">
    <property type="entry name" value="C_TYPE_LECTIN_1"/>
    <property type="match status" value="1"/>
</dbReference>
<dbReference type="PROSITE" id="PS50041">
    <property type="entry name" value="C_TYPE_LECTIN_2"/>
    <property type="match status" value="1"/>
</dbReference>
<reference key="1">
    <citation type="journal article" date="2009" name="Toxicon">
        <title>C-type lectin protein isoforms of Macrovipera lebetina: cDNA cloning and genetic diversity.</title>
        <authorList>
            <person name="Jebali J."/>
            <person name="Bazaa A."/>
            <person name="Sarray S."/>
            <person name="Benhaj K."/>
            <person name="Karboul A."/>
            <person name="El Ayeb M."/>
            <person name="Marrakchi N."/>
            <person name="Gargouri A."/>
        </authorList>
    </citation>
    <scope>NUCLEOTIDE SEQUENCE [MRNA]</scope>
</reference>
<evidence type="ECO:0000250" key="1"/>
<evidence type="ECO:0000255" key="2">
    <source>
        <dbReference type="PROSITE-ProRule" id="PRU00040"/>
    </source>
</evidence>
<evidence type="ECO:0000305" key="3"/>